<comment type="function">
    <text evidence="1">Involved in the biosynthesis of the osmoprotectant glycine betaine. Catalyzes the irreversible oxidation of betaine aldehyde to the corresponding acid.</text>
</comment>
<comment type="catalytic activity">
    <reaction evidence="1">
        <text>betaine aldehyde + NAD(+) + H2O = glycine betaine + NADH + 2 H(+)</text>
        <dbReference type="Rhea" id="RHEA:15305"/>
        <dbReference type="ChEBI" id="CHEBI:15377"/>
        <dbReference type="ChEBI" id="CHEBI:15378"/>
        <dbReference type="ChEBI" id="CHEBI:15710"/>
        <dbReference type="ChEBI" id="CHEBI:17750"/>
        <dbReference type="ChEBI" id="CHEBI:57540"/>
        <dbReference type="ChEBI" id="CHEBI:57945"/>
        <dbReference type="EC" id="1.2.1.8"/>
    </reaction>
    <physiologicalReaction direction="left-to-right" evidence="1">
        <dbReference type="Rhea" id="RHEA:15306"/>
    </physiologicalReaction>
</comment>
<comment type="cofactor">
    <cofactor evidence="1">
        <name>K(+)</name>
        <dbReference type="ChEBI" id="CHEBI:29103"/>
    </cofactor>
    <text evidence="1">Binds 2 potassium ions per subunit.</text>
</comment>
<comment type="pathway">
    <text evidence="1">Amine and polyamine biosynthesis; betaine biosynthesis via choline pathway; betaine from betaine aldehyde: step 1/1.</text>
</comment>
<comment type="subunit">
    <text evidence="1">Dimer of dimers.</text>
</comment>
<comment type="similarity">
    <text evidence="1">Belongs to the aldehyde dehydrogenase family.</text>
</comment>
<reference key="1">
    <citation type="submission" date="2002-12" db="EMBL/GenBank/DDBJ databases">
        <title>Complete genome sequence of Vibrio vulnificus CMCP6.</title>
        <authorList>
            <person name="Rhee J.H."/>
            <person name="Kim S.Y."/>
            <person name="Chung S.S."/>
            <person name="Kim J.J."/>
            <person name="Moon Y.H."/>
            <person name="Jeong H."/>
            <person name="Choy H.E."/>
        </authorList>
    </citation>
    <scope>NUCLEOTIDE SEQUENCE [LARGE SCALE GENOMIC DNA]</scope>
    <source>
        <strain>CMCP6</strain>
    </source>
</reference>
<name>BETB_VIBVU</name>
<feature type="chain" id="PRO_0000056556" description="Betaine aldehyde dehydrogenase">
    <location>
        <begin position="1"/>
        <end position="486"/>
    </location>
</feature>
<feature type="active site" description="Charge relay system" evidence="1">
    <location>
        <position position="159"/>
    </location>
</feature>
<feature type="active site" description="Proton acceptor" evidence="1">
    <location>
        <position position="247"/>
    </location>
</feature>
<feature type="active site" description="Nucleophile" evidence="1">
    <location>
        <position position="281"/>
    </location>
</feature>
<feature type="active site" description="Charge relay system" evidence="1">
    <location>
        <position position="459"/>
    </location>
</feature>
<feature type="binding site" evidence="1">
    <location>
        <position position="23"/>
    </location>
    <ligand>
        <name>K(+)</name>
        <dbReference type="ChEBI" id="CHEBI:29103"/>
        <label>1</label>
    </ligand>
</feature>
<feature type="binding site" evidence="1">
    <location>
        <position position="90"/>
    </location>
    <ligand>
        <name>K(+)</name>
        <dbReference type="ChEBI" id="CHEBI:29103"/>
        <label>1</label>
    </ligand>
</feature>
<feature type="binding site" evidence="1">
    <location>
        <begin position="147"/>
        <end position="149"/>
    </location>
    <ligand>
        <name>NAD(+)</name>
        <dbReference type="ChEBI" id="CHEBI:57540"/>
    </ligand>
</feature>
<feature type="binding site" evidence="1">
    <location>
        <begin position="173"/>
        <end position="176"/>
    </location>
    <ligand>
        <name>NAD(+)</name>
        <dbReference type="ChEBI" id="CHEBI:57540"/>
    </ligand>
</feature>
<feature type="binding site" evidence="1">
    <location>
        <begin position="226"/>
        <end position="229"/>
    </location>
    <ligand>
        <name>NAD(+)</name>
        <dbReference type="ChEBI" id="CHEBI:57540"/>
    </ligand>
</feature>
<feature type="binding site" evidence="1">
    <location>
        <position position="241"/>
    </location>
    <ligand>
        <name>K(+)</name>
        <dbReference type="ChEBI" id="CHEBI:29103"/>
        <label>2</label>
    </ligand>
</feature>
<feature type="binding site" evidence="1">
    <location>
        <position position="249"/>
    </location>
    <ligand>
        <name>NAD(+)</name>
        <dbReference type="ChEBI" id="CHEBI:57540"/>
    </ligand>
</feature>
<feature type="binding site" description="covalent" evidence="1">
    <location>
        <position position="281"/>
    </location>
    <ligand>
        <name>NAD(+)</name>
        <dbReference type="ChEBI" id="CHEBI:57540"/>
    </ligand>
</feature>
<feature type="binding site" evidence="1">
    <location>
        <position position="382"/>
    </location>
    <ligand>
        <name>NAD(+)</name>
        <dbReference type="ChEBI" id="CHEBI:57540"/>
    </ligand>
</feature>
<feature type="binding site" evidence="1">
    <location>
        <position position="452"/>
    </location>
    <ligand>
        <name>K(+)</name>
        <dbReference type="ChEBI" id="CHEBI:29103"/>
        <label>2</label>
    </ligand>
</feature>
<feature type="binding site" evidence="1">
    <location>
        <position position="455"/>
    </location>
    <ligand>
        <name>K(+)</name>
        <dbReference type="ChEBI" id="CHEBI:29103"/>
        <label>2</label>
    </ligand>
</feature>
<feature type="modified residue" description="Cysteine sulfenic acid (-SOH)" evidence="1">
    <location>
        <position position="281"/>
    </location>
</feature>
<evidence type="ECO:0000255" key="1">
    <source>
        <dbReference type="HAMAP-Rule" id="MF_00804"/>
    </source>
</evidence>
<sequence length="486" mass="52281">MEVTAHYIGGKPFVGDTGESFATLNPATGEVLAHIEQADERVLGHAIESAKLGFSVWSSMSAAERSRCLLKAAQLIRDHNDELAELEVRDTGKPIQEASVVDIATGADVIEYFAGLVNGLGGEQQSLGSNQFFYTRREPLGICAGIGAWNYPIQIAMWKAAPALAAGNAMIFKPSEETPLSALKLAELFTQAGVPDGVFNVVQGDYRVGQMLTAHPEIDKVSFTGESGTGKKVMADSAATLKPVTMELGGKSPLIIFDDADLDDAVSAAMVANFYTQGEVCTHGTRVYVQRAMYDAFVEQLKERTEKLIVGDPMNMETQIGSLISKSHLEKVLGAISSAKESGATLLTGGFQVTERGLEKGCFVAPTVFVDCRDEMPHVQNEIFGPVMSVLVFDDEDEVIARANNTQYGLAAGVFTQNLSKAHRVIHQLQAGICWINTWGNSPAEMPVGGYKLSGIGRENGQETLLHYTQTKSVFVELGAFDSPYA</sequence>
<accession>Q8D3K3</accession>
<protein>
    <recommendedName>
        <fullName evidence="1">Betaine aldehyde dehydrogenase</fullName>
        <shortName evidence="1">BADH</shortName>
        <ecNumber evidence="1">1.2.1.8</ecNumber>
    </recommendedName>
</protein>
<keyword id="KW-0479">Metal-binding</keyword>
<keyword id="KW-0520">NAD</keyword>
<keyword id="KW-0521">NADP</keyword>
<keyword id="KW-0558">Oxidation</keyword>
<keyword id="KW-0560">Oxidoreductase</keyword>
<keyword id="KW-0630">Potassium</keyword>
<gene>
    <name evidence="1" type="primary">betB</name>
    <name type="ordered locus">VV2_1687</name>
</gene>
<organism>
    <name type="scientific">Vibrio vulnificus (strain CMCP6)</name>
    <dbReference type="NCBI Taxonomy" id="216895"/>
    <lineage>
        <taxon>Bacteria</taxon>
        <taxon>Pseudomonadati</taxon>
        <taxon>Pseudomonadota</taxon>
        <taxon>Gammaproteobacteria</taxon>
        <taxon>Vibrionales</taxon>
        <taxon>Vibrionaceae</taxon>
        <taxon>Vibrio</taxon>
    </lineage>
</organism>
<proteinExistence type="inferred from homology"/>
<dbReference type="EC" id="1.2.1.8" evidence="1"/>
<dbReference type="EMBL" id="AE016796">
    <property type="protein sequence ID" value="AAO08543.1"/>
    <property type="molecule type" value="Genomic_DNA"/>
</dbReference>
<dbReference type="RefSeq" id="WP_011082525.1">
    <property type="nucleotide sequence ID" value="NC_004460.2"/>
</dbReference>
<dbReference type="SMR" id="Q8D3K3"/>
<dbReference type="KEGG" id="vvu:VV2_1687"/>
<dbReference type="HOGENOM" id="CLU_005391_0_0_6"/>
<dbReference type="UniPathway" id="UPA00529">
    <property type="reaction ID" value="UER00386"/>
</dbReference>
<dbReference type="Proteomes" id="UP000002275">
    <property type="component" value="Chromosome 2"/>
</dbReference>
<dbReference type="GO" id="GO:0008802">
    <property type="term" value="F:betaine-aldehyde dehydrogenase (NAD+) activity"/>
    <property type="evidence" value="ECO:0007669"/>
    <property type="project" value="UniProtKB-UniRule"/>
</dbReference>
<dbReference type="GO" id="GO:0046872">
    <property type="term" value="F:metal ion binding"/>
    <property type="evidence" value="ECO:0007669"/>
    <property type="project" value="UniProtKB-KW"/>
</dbReference>
<dbReference type="GO" id="GO:0019285">
    <property type="term" value="P:glycine betaine biosynthetic process from choline"/>
    <property type="evidence" value="ECO:0007669"/>
    <property type="project" value="UniProtKB-UniRule"/>
</dbReference>
<dbReference type="FunFam" id="3.40.605.10:FF:000026">
    <property type="entry name" value="Aldehyde dehydrogenase, putative"/>
    <property type="match status" value="1"/>
</dbReference>
<dbReference type="FunFam" id="3.40.309.10:FF:000014">
    <property type="entry name" value="NAD/NADP-dependent betaine aldehyde dehydrogenase"/>
    <property type="match status" value="1"/>
</dbReference>
<dbReference type="FunFam" id="3.40.605.10:FF:000007">
    <property type="entry name" value="NAD/NADP-dependent betaine aldehyde dehydrogenase"/>
    <property type="match status" value="1"/>
</dbReference>
<dbReference type="Gene3D" id="3.40.605.10">
    <property type="entry name" value="Aldehyde Dehydrogenase, Chain A, domain 1"/>
    <property type="match status" value="1"/>
</dbReference>
<dbReference type="Gene3D" id="3.40.309.10">
    <property type="entry name" value="Aldehyde Dehydrogenase, Chain A, domain 2"/>
    <property type="match status" value="1"/>
</dbReference>
<dbReference type="HAMAP" id="MF_00804">
    <property type="entry name" value="BADH"/>
    <property type="match status" value="1"/>
</dbReference>
<dbReference type="InterPro" id="IPR016161">
    <property type="entry name" value="Ald_DH/histidinol_DH"/>
</dbReference>
<dbReference type="InterPro" id="IPR016163">
    <property type="entry name" value="Ald_DH_C"/>
</dbReference>
<dbReference type="InterPro" id="IPR029510">
    <property type="entry name" value="Ald_DH_CS_GLU"/>
</dbReference>
<dbReference type="InterPro" id="IPR016162">
    <property type="entry name" value="Ald_DH_N"/>
</dbReference>
<dbReference type="InterPro" id="IPR015590">
    <property type="entry name" value="Aldehyde_DH_dom"/>
</dbReference>
<dbReference type="InterPro" id="IPR011264">
    <property type="entry name" value="BADH"/>
</dbReference>
<dbReference type="NCBIfam" id="NF009725">
    <property type="entry name" value="PRK13252.1"/>
    <property type="match status" value="1"/>
</dbReference>
<dbReference type="PANTHER" id="PTHR11699">
    <property type="entry name" value="ALDEHYDE DEHYDROGENASE-RELATED"/>
    <property type="match status" value="1"/>
</dbReference>
<dbReference type="Pfam" id="PF00171">
    <property type="entry name" value="Aldedh"/>
    <property type="match status" value="1"/>
</dbReference>
<dbReference type="SUPFAM" id="SSF53720">
    <property type="entry name" value="ALDH-like"/>
    <property type="match status" value="1"/>
</dbReference>
<dbReference type="PROSITE" id="PS00687">
    <property type="entry name" value="ALDEHYDE_DEHYDR_GLU"/>
    <property type="match status" value="1"/>
</dbReference>